<feature type="chain" id="PRO_0000268599" description="Putative multidrug resistance protein MdtD">
    <location>
        <begin position="1"/>
        <end position="471"/>
    </location>
</feature>
<feature type="topological domain" description="Periplasmic" evidence="1">
    <location>
        <begin position="1"/>
        <end position="11"/>
    </location>
</feature>
<feature type="transmembrane region" description="Helical" evidence="1">
    <location>
        <begin position="12"/>
        <end position="32"/>
    </location>
</feature>
<feature type="topological domain" description="Cytoplasmic" evidence="1">
    <location>
        <begin position="33"/>
        <end position="48"/>
    </location>
</feature>
<feature type="transmembrane region" description="Helical" evidence="1">
    <location>
        <begin position="49"/>
        <end position="69"/>
    </location>
</feature>
<feature type="topological domain" description="Periplasmic" evidence="1">
    <location>
        <begin position="70"/>
        <end position="76"/>
    </location>
</feature>
<feature type="transmembrane region" description="Helical" evidence="1">
    <location>
        <begin position="77"/>
        <end position="97"/>
    </location>
</feature>
<feature type="topological domain" description="Cytoplasmic" evidence="1">
    <location>
        <begin position="98"/>
        <end position="101"/>
    </location>
</feature>
<feature type="transmembrane region" description="Helical" evidence="1">
    <location>
        <begin position="102"/>
        <end position="124"/>
    </location>
</feature>
<feature type="topological domain" description="Periplasmic" evidence="1">
    <location>
        <begin position="125"/>
        <end position="137"/>
    </location>
</feature>
<feature type="transmembrane region" description="Helical" evidence="1">
    <location>
        <begin position="138"/>
        <end position="158"/>
    </location>
</feature>
<feature type="topological domain" description="Cytoplasmic" evidence="1">
    <location>
        <begin position="159"/>
        <end position="164"/>
    </location>
</feature>
<feature type="transmembrane region" description="Helical" evidence="1">
    <location>
        <begin position="165"/>
        <end position="185"/>
    </location>
</feature>
<feature type="topological domain" description="Periplasmic" evidence="1">
    <location>
        <begin position="186"/>
        <end position="196"/>
    </location>
</feature>
<feature type="transmembrane region" description="Helical" evidence="1">
    <location>
        <begin position="197"/>
        <end position="217"/>
    </location>
</feature>
<feature type="topological domain" description="Cytoplasmic" evidence="1">
    <location>
        <begin position="218"/>
        <end position="224"/>
    </location>
</feature>
<feature type="transmembrane region" description="Helical" evidence="1">
    <location>
        <begin position="225"/>
        <end position="245"/>
    </location>
</feature>
<feature type="topological domain" description="Periplasmic" evidence="1">
    <location>
        <begin position="246"/>
        <end position="262"/>
    </location>
</feature>
<feature type="transmembrane region" description="Helical" evidence="1">
    <location>
        <begin position="263"/>
        <end position="283"/>
    </location>
</feature>
<feature type="topological domain" description="Cytoplasmic" evidence="1">
    <location>
        <begin position="284"/>
        <end position="285"/>
    </location>
</feature>
<feature type="transmembrane region" description="Helical" evidence="1">
    <location>
        <begin position="286"/>
        <end position="306"/>
    </location>
</feature>
<feature type="topological domain" description="Periplasmic" evidence="1">
    <location>
        <begin position="307"/>
        <end position="341"/>
    </location>
</feature>
<feature type="transmembrane region" description="Helical" evidence="1">
    <location>
        <begin position="342"/>
        <end position="362"/>
    </location>
</feature>
<feature type="topological domain" description="Cytoplasmic" evidence="1">
    <location>
        <begin position="363"/>
        <end position="395"/>
    </location>
</feature>
<feature type="transmembrane region" description="Helical" evidence="1">
    <location>
        <begin position="396"/>
        <end position="416"/>
    </location>
</feature>
<feature type="topological domain" description="Periplasmic" evidence="1">
    <location>
        <begin position="417"/>
        <end position="430"/>
    </location>
</feature>
<feature type="transmembrane region" description="Helical" evidence="1">
    <location>
        <begin position="431"/>
        <end position="451"/>
    </location>
</feature>
<feature type="topological domain" description="Cytoplasmic" evidence="1">
    <location>
        <begin position="452"/>
        <end position="471"/>
    </location>
</feature>
<proteinExistence type="inferred from homology"/>
<reference key="1">
    <citation type="journal article" date="2005" name="Nucleic Acids Res.">
        <title>Genome dynamics and diversity of Shigella species, the etiologic agents of bacillary dysentery.</title>
        <authorList>
            <person name="Yang F."/>
            <person name="Yang J."/>
            <person name="Zhang X."/>
            <person name="Chen L."/>
            <person name="Jiang Y."/>
            <person name="Yan Y."/>
            <person name="Tang X."/>
            <person name="Wang J."/>
            <person name="Xiong Z."/>
            <person name="Dong J."/>
            <person name="Xue Y."/>
            <person name="Zhu Y."/>
            <person name="Xu X."/>
            <person name="Sun L."/>
            <person name="Chen S."/>
            <person name="Nie H."/>
            <person name="Peng J."/>
            <person name="Xu J."/>
            <person name="Wang Y."/>
            <person name="Yuan Z."/>
            <person name="Wen Y."/>
            <person name="Yao Z."/>
            <person name="Shen Y."/>
            <person name="Qiang B."/>
            <person name="Hou Y."/>
            <person name="Yu J."/>
            <person name="Jin Q."/>
        </authorList>
    </citation>
    <scope>NUCLEOTIDE SEQUENCE [LARGE SCALE GENOMIC DNA]</scope>
    <source>
        <strain>Sb227</strain>
    </source>
</reference>
<protein>
    <recommendedName>
        <fullName evidence="1">Putative multidrug resistance protein MdtD</fullName>
    </recommendedName>
</protein>
<organism>
    <name type="scientific">Shigella boydii serotype 4 (strain Sb227)</name>
    <dbReference type="NCBI Taxonomy" id="300268"/>
    <lineage>
        <taxon>Bacteria</taxon>
        <taxon>Pseudomonadati</taxon>
        <taxon>Pseudomonadota</taxon>
        <taxon>Gammaproteobacteria</taxon>
        <taxon>Enterobacterales</taxon>
        <taxon>Enterobacteriaceae</taxon>
        <taxon>Shigella</taxon>
    </lineage>
</organism>
<comment type="subcellular location">
    <subcellularLocation>
        <location evidence="1">Cell inner membrane</location>
        <topology evidence="1">Multi-pass membrane protein</topology>
    </subcellularLocation>
</comment>
<comment type="similarity">
    <text evidence="1">Belongs to the major facilitator superfamily. TCR/Tet family.</text>
</comment>
<name>MDTD_SHIBS</name>
<keyword id="KW-0997">Cell inner membrane</keyword>
<keyword id="KW-1003">Cell membrane</keyword>
<keyword id="KW-0472">Membrane</keyword>
<keyword id="KW-0812">Transmembrane</keyword>
<keyword id="KW-1133">Transmembrane helix</keyword>
<keyword id="KW-0813">Transport</keyword>
<gene>
    <name evidence="1" type="primary">mdtD</name>
    <name type="ordered locus">SBO_0903</name>
</gene>
<dbReference type="EMBL" id="CP000036">
    <property type="protein sequence ID" value="ABB65570.1"/>
    <property type="molecule type" value="Genomic_DNA"/>
</dbReference>
<dbReference type="RefSeq" id="WP_000130855.1">
    <property type="nucleotide sequence ID" value="NC_007613.1"/>
</dbReference>
<dbReference type="SMR" id="Q323D8"/>
<dbReference type="KEGG" id="sbo:SBO_0903"/>
<dbReference type="HOGENOM" id="CLU_000960_28_0_6"/>
<dbReference type="Proteomes" id="UP000007067">
    <property type="component" value="Chromosome"/>
</dbReference>
<dbReference type="GO" id="GO:0005886">
    <property type="term" value="C:plasma membrane"/>
    <property type="evidence" value="ECO:0007669"/>
    <property type="project" value="UniProtKB-SubCell"/>
</dbReference>
<dbReference type="GO" id="GO:0022857">
    <property type="term" value="F:transmembrane transporter activity"/>
    <property type="evidence" value="ECO:0007669"/>
    <property type="project" value="UniProtKB-UniRule"/>
</dbReference>
<dbReference type="CDD" id="cd17503">
    <property type="entry name" value="MFS_LmrB_MDR_like"/>
    <property type="match status" value="1"/>
</dbReference>
<dbReference type="FunFam" id="1.20.1250.20:FF:000021">
    <property type="entry name" value="Putative multidrug resistance protein MdtD"/>
    <property type="match status" value="1"/>
</dbReference>
<dbReference type="FunFam" id="1.20.1720.10:FF:000001">
    <property type="entry name" value="Putative multidrug resistance protein MdtD"/>
    <property type="match status" value="1"/>
</dbReference>
<dbReference type="Gene3D" id="1.20.1250.20">
    <property type="entry name" value="MFS general substrate transporter like domains"/>
    <property type="match status" value="1"/>
</dbReference>
<dbReference type="Gene3D" id="1.20.1720.10">
    <property type="entry name" value="Multidrug resistance protein D"/>
    <property type="match status" value="1"/>
</dbReference>
<dbReference type="HAMAP" id="MF_01577">
    <property type="entry name" value="MFS_MdtD"/>
    <property type="match status" value="1"/>
</dbReference>
<dbReference type="InterPro" id="IPR004638">
    <property type="entry name" value="EmrB-like"/>
</dbReference>
<dbReference type="InterPro" id="IPR011701">
    <property type="entry name" value="MFS"/>
</dbReference>
<dbReference type="InterPro" id="IPR020846">
    <property type="entry name" value="MFS_dom"/>
</dbReference>
<dbReference type="InterPro" id="IPR036259">
    <property type="entry name" value="MFS_trans_sf"/>
</dbReference>
<dbReference type="InterPro" id="IPR023721">
    <property type="entry name" value="Multi-R_MdtD"/>
</dbReference>
<dbReference type="NCBIfam" id="TIGR00711">
    <property type="entry name" value="efflux_EmrB"/>
    <property type="match status" value="1"/>
</dbReference>
<dbReference type="NCBIfam" id="NF007799">
    <property type="entry name" value="PRK10504.1"/>
    <property type="match status" value="1"/>
</dbReference>
<dbReference type="PANTHER" id="PTHR42718:SF46">
    <property type="entry name" value="BLR6921 PROTEIN"/>
    <property type="match status" value="1"/>
</dbReference>
<dbReference type="PANTHER" id="PTHR42718">
    <property type="entry name" value="MAJOR FACILITATOR SUPERFAMILY MULTIDRUG TRANSPORTER MFSC"/>
    <property type="match status" value="1"/>
</dbReference>
<dbReference type="Pfam" id="PF07690">
    <property type="entry name" value="MFS_1"/>
    <property type="match status" value="1"/>
</dbReference>
<dbReference type="PRINTS" id="PR01036">
    <property type="entry name" value="TCRTETB"/>
</dbReference>
<dbReference type="SUPFAM" id="SSF103473">
    <property type="entry name" value="MFS general substrate transporter"/>
    <property type="match status" value="1"/>
</dbReference>
<dbReference type="PROSITE" id="PS50850">
    <property type="entry name" value="MFS"/>
    <property type="match status" value="1"/>
</dbReference>
<accession>Q323D8</accession>
<evidence type="ECO:0000255" key="1">
    <source>
        <dbReference type="HAMAP-Rule" id="MF_01577"/>
    </source>
</evidence>
<sequence>MTDLPDSTRWQLWIVAFGFFMQSLDTTIVNTALPSMAQSLGESPLHMHMVIVSYVLTVAVMLPASGWLADKVGVRNIFFTAIVLFTLGSLFCALSGTLNELLLARALQGVGGAMMVPVGRLTVMKIVPREQYMAAMTFVTLPGQVGPLLGPALGGLLVEYASWHWIFLINIPVGIIGAIATLLLMPNYTMQTWRFDLSGFLLLAVGMAVLTLALDGSKGTGLSPLAIAGLVAVGVVALVLYLLHARNNNRALFSLKLFRTRTFSLGLAGSFAGRIGSGMLPFMTPVFLQIGLGFSPFHAGLMMIPMVLGSMGMKRIVVQVVNRFGYRRVLVATTLGLSLVTLLFMTTALLGWYYVLPFVLFLQGMVNSTRFSSMNTLTLKDLPDNLASSGNSLLSMIMQLSMSIGVTIAGLLLGLFGSQHVSVDSGTTQTVFMYTWLSMALIIALPAFIFARVPNDTHQNVAISRRKRSAQ</sequence>